<proteinExistence type="evidence at protein level"/>
<organism>
    <name type="scientific">Homo sapiens</name>
    <name type="common">Human</name>
    <dbReference type="NCBI Taxonomy" id="9606"/>
    <lineage>
        <taxon>Eukaryota</taxon>
        <taxon>Metazoa</taxon>
        <taxon>Chordata</taxon>
        <taxon>Craniata</taxon>
        <taxon>Vertebrata</taxon>
        <taxon>Euteleostomi</taxon>
        <taxon>Mammalia</taxon>
        <taxon>Eutheria</taxon>
        <taxon>Euarchontoglires</taxon>
        <taxon>Primates</taxon>
        <taxon>Haplorrhini</taxon>
        <taxon>Catarrhini</taxon>
        <taxon>Hominidae</taxon>
        <taxon>Homo</taxon>
    </lineage>
</organism>
<keyword id="KW-0007">Acetylation</keyword>
<keyword id="KW-0025">Alternative splicing</keyword>
<keyword id="KW-0903">Direct protein sequencing</keyword>
<keyword id="KW-0597">Phosphoprotein</keyword>
<keyword id="KW-1267">Proteomics identification</keyword>
<keyword id="KW-1185">Reference proteome</keyword>
<comment type="alternative products">
    <event type="alternative splicing"/>
    <isoform>
        <id>Q96S19-1</id>
        <name>1</name>
        <sequence type="displayed"/>
    </isoform>
    <isoform>
        <id>Q96S19-2</id>
        <name>2</name>
        <sequence type="described" ref="VSP_033918"/>
    </isoform>
    <isoform>
        <id>Q96S19-3</id>
        <name>3</name>
        <sequence type="described" ref="VSP_033919"/>
    </isoform>
    <isoform>
        <id>Q96S19-4</id>
        <name>4</name>
        <sequence type="described" ref="VSP_045804"/>
    </isoform>
    <isoform>
        <id>Q96S19-5</id>
        <name>5</name>
        <sequence type="described" ref="VSP_046838"/>
    </isoform>
    <isoform>
        <id>Q96S19-6</id>
        <name>6</name>
        <sequence type="described" ref="VSP_046839"/>
    </isoform>
</comment>
<comment type="similarity">
    <text evidence="6">Belongs to the UPF0585 family.</text>
</comment>
<comment type="sequence caution" evidence="6">
    <conflict type="erroneous gene model prediction">
        <sequence resource="EMBL-CDS" id="AAK61238"/>
    </conflict>
</comment>
<comment type="sequence caution" evidence="6">
    <conflict type="erroneous gene model prediction">
        <sequence resource="EMBL-CDS" id="EAW85785"/>
    </conflict>
</comment>
<evidence type="ECO:0000250" key="1">
    <source>
        <dbReference type="UniProtKB" id="Q9DCS2"/>
    </source>
</evidence>
<evidence type="ECO:0000269" key="2">
    <source>
    </source>
</evidence>
<evidence type="ECO:0000269" key="3">
    <source ref="6"/>
</evidence>
<evidence type="ECO:0000303" key="4">
    <source>
    </source>
</evidence>
<evidence type="ECO:0000303" key="5">
    <source>
    </source>
</evidence>
<evidence type="ECO:0000305" key="6"/>
<evidence type="ECO:0000312" key="7">
    <source>
        <dbReference type="HGNC" id="HGNC:14141"/>
    </source>
</evidence>
<evidence type="ECO:0007744" key="8">
    <source>
    </source>
</evidence>
<sequence>MLVAAAAERNKDPILHVLRQYLDPAQRGVRVLEVASGSGQHAAHFARAFPLAEWQPSDVDQRCLDSIAATTQAQGLTNVKAPLHLDVTWGWEHWGGILPQSLDLLLCINMAHVSPLRCTEGLFRAAGHLLKPRALLITYGPYAINGKISPQSNVDFDLMLRCRNPEWGLRDTALLEDLGKASGLLLERMVDMPANNKCLIFRKN</sequence>
<dbReference type="EMBL" id="AK057077">
    <property type="protein sequence ID" value="BAB71362.1"/>
    <property type="molecule type" value="mRNA"/>
</dbReference>
<dbReference type="EMBL" id="AK293046">
    <property type="protein sequence ID" value="BAF85735.1"/>
    <property type="molecule type" value="mRNA"/>
</dbReference>
<dbReference type="EMBL" id="AK294482">
    <property type="protein sequence ID" value="BAG57706.1"/>
    <property type="molecule type" value="mRNA"/>
</dbReference>
<dbReference type="EMBL" id="AK295628">
    <property type="protein sequence ID" value="BAG58505.1"/>
    <property type="molecule type" value="mRNA"/>
</dbReference>
<dbReference type="EMBL" id="AE006464">
    <property type="protein sequence ID" value="AAK61238.1"/>
    <property type="status" value="ALT_SEQ"/>
    <property type="molecule type" value="Genomic_DNA"/>
</dbReference>
<dbReference type="EMBL" id="Z84479">
    <property type="status" value="NOT_ANNOTATED_CDS"/>
    <property type="molecule type" value="Genomic_DNA"/>
</dbReference>
<dbReference type="EMBL" id="CH471112">
    <property type="protein sequence ID" value="EAW85787.1"/>
    <property type="molecule type" value="Genomic_DNA"/>
</dbReference>
<dbReference type="EMBL" id="CH471112">
    <property type="protein sequence ID" value="EAW85785.1"/>
    <property type="status" value="ALT_SEQ"/>
    <property type="molecule type" value="Genomic_DNA"/>
</dbReference>
<dbReference type="EMBL" id="CH471112">
    <property type="protein sequence ID" value="EAW85786.1"/>
    <property type="molecule type" value="Genomic_DNA"/>
</dbReference>
<dbReference type="EMBL" id="CH471112">
    <property type="protein sequence ID" value="EAW85788.1"/>
    <property type="molecule type" value="Genomic_DNA"/>
</dbReference>
<dbReference type="EMBL" id="BC007207">
    <property type="protein sequence ID" value="AAH07207.1"/>
    <property type="molecule type" value="mRNA"/>
</dbReference>
<dbReference type="EMBL" id="BC047118">
    <property type="protein sequence ID" value="AAH47118.1"/>
    <property type="molecule type" value="mRNA"/>
</dbReference>
<dbReference type="CCDS" id="CCDS32352.1">
    <molecule id="Q96S19-3"/>
</dbReference>
<dbReference type="CCDS" id="CCDS42090.1">
    <molecule id="Q96S19-6"/>
</dbReference>
<dbReference type="CCDS" id="CCDS42091.1">
    <molecule id="Q96S19-4"/>
</dbReference>
<dbReference type="CCDS" id="CCDS45367.1">
    <molecule id="Q96S19-5"/>
</dbReference>
<dbReference type="CCDS" id="CCDS45368.1">
    <molecule id="Q96S19-1"/>
</dbReference>
<dbReference type="RefSeq" id="NP_001035250.1">
    <molecule id="Q96S19-4"/>
    <property type="nucleotide sequence ID" value="NM_001040160.3"/>
</dbReference>
<dbReference type="RefSeq" id="NP_001035251.1">
    <molecule id="Q96S19-3"/>
    <property type="nucleotide sequence ID" value="NM_001040161.3"/>
</dbReference>
<dbReference type="RefSeq" id="NP_001035252.1">
    <molecule id="Q96S19-5"/>
    <property type="nucleotide sequence ID" value="NM_001040162.3"/>
</dbReference>
<dbReference type="RefSeq" id="NP_001035255.1">
    <molecule id="Q96S19-6"/>
    <property type="nucleotide sequence ID" value="NM_001040165.3"/>
</dbReference>
<dbReference type="RefSeq" id="NP_115742.3">
    <molecule id="Q96S19-1"/>
    <property type="nucleotide sequence ID" value="NM_032366.4"/>
</dbReference>
<dbReference type="SMR" id="Q96S19"/>
<dbReference type="BioGRID" id="124050">
    <property type="interactions" value="10"/>
</dbReference>
<dbReference type="FunCoup" id="Q96S19">
    <property type="interactions" value="257"/>
</dbReference>
<dbReference type="IntAct" id="Q96S19">
    <property type="interactions" value="7"/>
</dbReference>
<dbReference type="MINT" id="Q96S19"/>
<dbReference type="STRING" id="9606.ENSP00000440765"/>
<dbReference type="iPTMnet" id="Q96S19"/>
<dbReference type="PhosphoSitePlus" id="Q96S19"/>
<dbReference type="BioMuta" id="METTL26"/>
<dbReference type="DMDM" id="189082900"/>
<dbReference type="jPOST" id="Q96S19"/>
<dbReference type="MassIVE" id="Q96S19"/>
<dbReference type="PaxDb" id="9606-ENSP00000440765"/>
<dbReference type="PeptideAtlas" id="Q96S19"/>
<dbReference type="ProteomicsDB" id="14271"/>
<dbReference type="ProteomicsDB" id="27969"/>
<dbReference type="ProteomicsDB" id="28082"/>
<dbReference type="ProteomicsDB" id="78056">
    <molecule id="Q96S19-1"/>
</dbReference>
<dbReference type="ProteomicsDB" id="78057">
    <molecule id="Q96S19-2"/>
</dbReference>
<dbReference type="ProteomicsDB" id="78058">
    <molecule id="Q96S19-3"/>
</dbReference>
<dbReference type="Pumba" id="Q96S19"/>
<dbReference type="Antibodypedia" id="51680">
    <property type="antibodies" value="73 antibodies from 18 providers"/>
</dbReference>
<dbReference type="DNASU" id="84326"/>
<dbReference type="Ensembl" id="ENST00000301686.13">
    <molecule id="Q96S19-1"/>
    <property type="protein sequence ID" value="ENSP00000445926.2"/>
    <property type="gene ID" value="ENSG00000130731.16"/>
</dbReference>
<dbReference type="Ensembl" id="ENST00000338401.8">
    <molecule id="Q96S19-3"/>
    <property type="protein sequence ID" value="ENSP00000444140.2"/>
    <property type="gene ID" value="ENSG00000130731.16"/>
</dbReference>
<dbReference type="Ensembl" id="ENST00000397664.8">
    <molecule id="Q96S19-5"/>
    <property type="protein sequence ID" value="ENSP00000440475.2"/>
    <property type="gene ID" value="ENSG00000130731.16"/>
</dbReference>
<dbReference type="Ensembl" id="ENST00000397665.6">
    <molecule id="Q96S19-6"/>
    <property type="protein sequence ID" value="ENSP00000444460.2"/>
    <property type="gene ID" value="ENSG00000130731.16"/>
</dbReference>
<dbReference type="Ensembl" id="ENST00000397666.6">
    <molecule id="Q96S19-4"/>
    <property type="protein sequence ID" value="ENSP00000440765.2"/>
    <property type="gene ID" value="ENSG00000130731.16"/>
</dbReference>
<dbReference type="GeneID" id="84326"/>
<dbReference type="KEGG" id="hsa:84326"/>
<dbReference type="MANE-Select" id="ENST00000301686.13">
    <property type="protein sequence ID" value="ENSP00000445926.2"/>
    <property type="RefSeq nucleotide sequence ID" value="NM_032366.5"/>
    <property type="RefSeq protein sequence ID" value="NP_115742.3"/>
</dbReference>
<dbReference type="UCSC" id="uc002chv.3">
    <molecule id="Q96S19-1"/>
    <property type="organism name" value="human"/>
</dbReference>
<dbReference type="AGR" id="HGNC:14141"/>
<dbReference type="CTD" id="84326"/>
<dbReference type="GeneCards" id="METTL26"/>
<dbReference type="HGNC" id="HGNC:14141">
    <property type="gene designation" value="METTL26"/>
</dbReference>
<dbReference type="HPA" id="ENSG00000130731">
    <property type="expression patterns" value="Low tissue specificity"/>
</dbReference>
<dbReference type="neXtProt" id="NX_Q96S19"/>
<dbReference type="OpenTargets" id="ENSG00000130731"/>
<dbReference type="PharmGKB" id="PA25526"/>
<dbReference type="VEuPathDB" id="HostDB:ENSG00000130731"/>
<dbReference type="eggNOG" id="ENOG502SNXQ">
    <property type="taxonomic scope" value="Eukaryota"/>
</dbReference>
<dbReference type="GeneTree" id="ENSGT00390000010750"/>
<dbReference type="HOGENOM" id="CLU_067698_2_0_1"/>
<dbReference type="InParanoid" id="Q96S19"/>
<dbReference type="OMA" id="YLYGPYK"/>
<dbReference type="OrthoDB" id="10258744at2759"/>
<dbReference type="PAN-GO" id="Q96S19">
    <property type="GO annotations" value="0 GO annotations based on evolutionary models"/>
</dbReference>
<dbReference type="PhylomeDB" id="Q96S19"/>
<dbReference type="TreeFam" id="TF315025"/>
<dbReference type="PathwayCommons" id="Q96S19"/>
<dbReference type="SignaLink" id="Q96S19"/>
<dbReference type="BioGRID-ORCS" id="84326">
    <property type="hits" value="9 hits in 1125 CRISPR screens"/>
</dbReference>
<dbReference type="GeneWiki" id="Chromosome_16_open_reading_frame_13"/>
<dbReference type="GenomeRNAi" id="84326"/>
<dbReference type="Pharos" id="Q96S19">
    <property type="development level" value="Tdark"/>
</dbReference>
<dbReference type="PRO" id="PR:Q96S19"/>
<dbReference type="Proteomes" id="UP000005640">
    <property type="component" value="Chromosome 16"/>
</dbReference>
<dbReference type="RNAct" id="Q96S19">
    <property type="molecule type" value="protein"/>
</dbReference>
<dbReference type="Bgee" id="ENSG00000130731">
    <property type="expression patterns" value="Expressed in apex of heart and 178 other cell types or tissues"/>
</dbReference>
<dbReference type="ExpressionAtlas" id="Q96S19">
    <property type="expression patterns" value="baseline and differential"/>
</dbReference>
<dbReference type="Gene3D" id="3.40.50.150">
    <property type="entry name" value="Vaccinia Virus protein VP39"/>
    <property type="match status" value="1"/>
</dbReference>
<dbReference type="InterPro" id="IPR010342">
    <property type="entry name" value="DUF938"/>
</dbReference>
<dbReference type="InterPro" id="IPR029063">
    <property type="entry name" value="SAM-dependent_MTases_sf"/>
</dbReference>
<dbReference type="PANTHER" id="PTHR20974:SF2">
    <property type="entry name" value="METHYLTRANSFERASE-LIKE 26"/>
    <property type="match status" value="1"/>
</dbReference>
<dbReference type="PANTHER" id="PTHR20974">
    <property type="entry name" value="UPF0585 PROTEIN CG18661"/>
    <property type="match status" value="1"/>
</dbReference>
<dbReference type="Pfam" id="PF06080">
    <property type="entry name" value="DUF938"/>
    <property type="match status" value="1"/>
</dbReference>
<dbReference type="SUPFAM" id="SSF53335">
    <property type="entry name" value="S-adenosyl-L-methionine-dependent methyltransferases"/>
    <property type="match status" value="1"/>
</dbReference>
<name>MTL26_HUMAN</name>
<protein>
    <recommendedName>
        <fullName evidence="7">Methyltransferase-like 26</fullName>
    </recommendedName>
</protein>
<gene>
    <name evidence="7" type="primary">METTL26</name>
    <name type="synonym">JFP2</name>
    <name type="ORF">C16orf13</name>
</gene>
<accession>Q96S19</accession>
<accession>A8MTR1</accession>
<accession>A8MWJ8</accession>
<accession>A8MZA1</accession>
<accession>B4DG95</accession>
<accession>B4DIJ3</accession>
<accession>D6REA6</accession>
<accession>F6TF62</accession>
<accession>F6VM53</accession>
<accession>Q96IW1</accession>
<accession>Q96MD6</accession>
<reference key="1">
    <citation type="journal article" date="2004" name="Nat. Genet.">
        <title>Complete sequencing and characterization of 21,243 full-length human cDNAs.</title>
        <authorList>
            <person name="Ota T."/>
            <person name="Suzuki Y."/>
            <person name="Nishikawa T."/>
            <person name="Otsuki T."/>
            <person name="Sugiyama T."/>
            <person name="Irie R."/>
            <person name="Wakamatsu A."/>
            <person name="Hayashi K."/>
            <person name="Sato H."/>
            <person name="Nagai K."/>
            <person name="Kimura K."/>
            <person name="Makita H."/>
            <person name="Sekine M."/>
            <person name="Obayashi M."/>
            <person name="Nishi T."/>
            <person name="Shibahara T."/>
            <person name="Tanaka T."/>
            <person name="Ishii S."/>
            <person name="Yamamoto J."/>
            <person name="Saito K."/>
            <person name="Kawai Y."/>
            <person name="Isono Y."/>
            <person name="Nakamura Y."/>
            <person name="Nagahari K."/>
            <person name="Murakami K."/>
            <person name="Yasuda T."/>
            <person name="Iwayanagi T."/>
            <person name="Wagatsuma M."/>
            <person name="Shiratori A."/>
            <person name="Sudo H."/>
            <person name="Hosoiri T."/>
            <person name="Kaku Y."/>
            <person name="Kodaira H."/>
            <person name="Kondo H."/>
            <person name="Sugawara M."/>
            <person name="Takahashi M."/>
            <person name="Kanda K."/>
            <person name="Yokoi T."/>
            <person name="Furuya T."/>
            <person name="Kikkawa E."/>
            <person name="Omura Y."/>
            <person name="Abe K."/>
            <person name="Kamihara K."/>
            <person name="Katsuta N."/>
            <person name="Sato K."/>
            <person name="Tanikawa M."/>
            <person name="Yamazaki M."/>
            <person name="Ninomiya K."/>
            <person name="Ishibashi T."/>
            <person name="Yamashita H."/>
            <person name="Murakawa K."/>
            <person name="Fujimori K."/>
            <person name="Tanai H."/>
            <person name="Kimata M."/>
            <person name="Watanabe M."/>
            <person name="Hiraoka S."/>
            <person name="Chiba Y."/>
            <person name="Ishida S."/>
            <person name="Ono Y."/>
            <person name="Takiguchi S."/>
            <person name="Watanabe S."/>
            <person name="Yosida M."/>
            <person name="Hotuta T."/>
            <person name="Kusano J."/>
            <person name="Kanehori K."/>
            <person name="Takahashi-Fujii A."/>
            <person name="Hara H."/>
            <person name="Tanase T.-O."/>
            <person name="Nomura Y."/>
            <person name="Togiya S."/>
            <person name="Komai F."/>
            <person name="Hara R."/>
            <person name="Takeuchi K."/>
            <person name="Arita M."/>
            <person name="Imose N."/>
            <person name="Musashino K."/>
            <person name="Yuuki H."/>
            <person name="Oshima A."/>
            <person name="Sasaki N."/>
            <person name="Aotsuka S."/>
            <person name="Yoshikawa Y."/>
            <person name="Matsunawa H."/>
            <person name="Ichihara T."/>
            <person name="Shiohata N."/>
            <person name="Sano S."/>
            <person name="Moriya S."/>
            <person name="Momiyama H."/>
            <person name="Satoh N."/>
            <person name="Takami S."/>
            <person name="Terashima Y."/>
            <person name="Suzuki O."/>
            <person name="Nakagawa S."/>
            <person name="Senoh A."/>
            <person name="Mizoguchi H."/>
            <person name="Goto Y."/>
            <person name="Shimizu F."/>
            <person name="Wakebe H."/>
            <person name="Hishigaki H."/>
            <person name="Watanabe T."/>
            <person name="Sugiyama A."/>
            <person name="Takemoto M."/>
            <person name="Kawakami B."/>
            <person name="Yamazaki M."/>
            <person name="Watanabe K."/>
            <person name="Kumagai A."/>
            <person name="Itakura S."/>
            <person name="Fukuzumi Y."/>
            <person name="Fujimori Y."/>
            <person name="Komiyama M."/>
            <person name="Tashiro H."/>
            <person name="Tanigami A."/>
            <person name="Fujiwara T."/>
            <person name="Ono T."/>
            <person name="Yamada K."/>
            <person name="Fujii Y."/>
            <person name="Ozaki K."/>
            <person name="Hirao M."/>
            <person name="Ohmori Y."/>
            <person name="Kawabata A."/>
            <person name="Hikiji T."/>
            <person name="Kobatake N."/>
            <person name="Inagaki H."/>
            <person name="Ikema Y."/>
            <person name="Okamoto S."/>
            <person name="Okitani R."/>
            <person name="Kawakami T."/>
            <person name="Noguchi S."/>
            <person name="Itoh T."/>
            <person name="Shigeta K."/>
            <person name="Senba T."/>
            <person name="Matsumura K."/>
            <person name="Nakajima Y."/>
            <person name="Mizuno T."/>
            <person name="Morinaga M."/>
            <person name="Sasaki M."/>
            <person name="Togashi T."/>
            <person name="Oyama M."/>
            <person name="Hata H."/>
            <person name="Watanabe M."/>
            <person name="Komatsu T."/>
            <person name="Mizushima-Sugano J."/>
            <person name="Satoh T."/>
            <person name="Shirai Y."/>
            <person name="Takahashi Y."/>
            <person name="Nakagawa K."/>
            <person name="Okumura K."/>
            <person name="Nagase T."/>
            <person name="Nomura N."/>
            <person name="Kikuchi H."/>
            <person name="Masuho Y."/>
            <person name="Yamashita R."/>
            <person name="Nakai K."/>
            <person name="Yada T."/>
            <person name="Nakamura Y."/>
            <person name="Ohara O."/>
            <person name="Isogai T."/>
            <person name="Sugano S."/>
        </authorList>
    </citation>
    <scope>NUCLEOTIDE SEQUENCE [LARGE SCALE MRNA] (ISOFORMS 1; 2 AND 4)</scope>
    <source>
        <tissue>Amygdala</tissue>
        <tissue>Hippocampus</tissue>
        <tissue>Small intestine</tissue>
    </source>
</reference>
<reference key="2">
    <citation type="journal article" date="2001" name="Hum. Mol. Genet.">
        <title>Sequence, structure and pathology of the fully annotated terminal 2 Mb of the short arm of human chromosome 16.</title>
        <authorList>
            <person name="Daniels R.J."/>
            <person name="Peden J.F."/>
            <person name="Lloyd C."/>
            <person name="Horsley S.W."/>
            <person name="Clark K."/>
            <person name="Tufarelli C."/>
            <person name="Kearney L."/>
            <person name="Buckle V.J."/>
            <person name="Doggett N.A."/>
            <person name="Flint J."/>
            <person name="Higgs D.R."/>
        </authorList>
    </citation>
    <scope>NUCLEOTIDE SEQUENCE [LARGE SCALE GENOMIC DNA]</scope>
</reference>
<reference key="3">
    <citation type="journal article" date="2004" name="Nature">
        <title>The sequence and analysis of duplication-rich human chromosome 16.</title>
        <authorList>
            <person name="Martin J."/>
            <person name="Han C."/>
            <person name="Gordon L.A."/>
            <person name="Terry A."/>
            <person name="Prabhakar S."/>
            <person name="She X."/>
            <person name="Xie G."/>
            <person name="Hellsten U."/>
            <person name="Chan Y.M."/>
            <person name="Altherr M."/>
            <person name="Couronne O."/>
            <person name="Aerts A."/>
            <person name="Bajorek E."/>
            <person name="Black S."/>
            <person name="Blumer H."/>
            <person name="Branscomb E."/>
            <person name="Brown N.C."/>
            <person name="Bruno W.J."/>
            <person name="Buckingham J.M."/>
            <person name="Callen D.F."/>
            <person name="Campbell C.S."/>
            <person name="Campbell M.L."/>
            <person name="Campbell E.W."/>
            <person name="Caoile C."/>
            <person name="Challacombe J.F."/>
            <person name="Chasteen L.A."/>
            <person name="Chertkov O."/>
            <person name="Chi H.C."/>
            <person name="Christensen M."/>
            <person name="Clark L.M."/>
            <person name="Cohn J.D."/>
            <person name="Denys M."/>
            <person name="Detter J.C."/>
            <person name="Dickson M."/>
            <person name="Dimitrijevic-Bussod M."/>
            <person name="Escobar J."/>
            <person name="Fawcett J.J."/>
            <person name="Flowers D."/>
            <person name="Fotopulos D."/>
            <person name="Glavina T."/>
            <person name="Gomez M."/>
            <person name="Gonzales E."/>
            <person name="Goodstein D."/>
            <person name="Goodwin L.A."/>
            <person name="Grady D.L."/>
            <person name="Grigoriev I."/>
            <person name="Groza M."/>
            <person name="Hammon N."/>
            <person name="Hawkins T."/>
            <person name="Haydu L."/>
            <person name="Hildebrand C.E."/>
            <person name="Huang W."/>
            <person name="Israni S."/>
            <person name="Jett J."/>
            <person name="Jewett P.B."/>
            <person name="Kadner K."/>
            <person name="Kimball H."/>
            <person name="Kobayashi A."/>
            <person name="Krawczyk M.-C."/>
            <person name="Leyba T."/>
            <person name="Longmire J.L."/>
            <person name="Lopez F."/>
            <person name="Lou Y."/>
            <person name="Lowry S."/>
            <person name="Ludeman T."/>
            <person name="Manohar C.F."/>
            <person name="Mark G.A."/>
            <person name="McMurray K.L."/>
            <person name="Meincke L.J."/>
            <person name="Morgan J."/>
            <person name="Moyzis R.K."/>
            <person name="Mundt M.O."/>
            <person name="Munk A.C."/>
            <person name="Nandkeshwar R.D."/>
            <person name="Pitluck S."/>
            <person name="Pollard M."/>
            <person name="Predki P."/>
            <person name="Parson-Quintana B."/>
            <person name="Ramirez L."/>
            <person name="Rash S."/>
            <person name="Retterer J."/>
            <person name="Ricke D.O."/>
            <person name="Robinson D.L."/>
            <person name="Rodriguez A."/>
            <person name="Salamov A."/>
            <person name="Saunders E.H."/>
            <person name="Scott D."/>
            <person name="Shough T."/>
            <person name="Stallings R.L."/>
            <person name="Stalvey M."/>
            <person name="Sutherland R.D."/>
            <person name="Tapia R."/>
            <person name="Tesmer J.G."/>
            <person name="Thayer N."/>
            <person name="Thompson L.S."/>
            <person name="Tice H."/>
            <person name="Torney D.C."/>
            <person name="Tran-Gyamfi M."/>
            <person name="Tsai M."/>
            <person name="Ulanovsky L.E."/>
            <person name="Ustaszewska A."/>
            <person name="Vo N."/>
            <person name="White P.S."/>
            <person name="Williams A.L."/>
            <person name="Wills P.L."/>
            <person name="Wu J.-R."/>
            <person name="Wu K."/>
            <person name="Yang J."/>
            <person name="DeJong P."/>
            <person name="Bruce D."/>
            <person name="Doggett N.A."/>
            <person name="Deaven L."/>
            <person name="Schmutz J."/>
            <person name="Grimwood J."/>
            <person name="Richardson P."/>
            <person name="Rokhsar D.S."/>
            <person name="Eichler E.E."/>
            <person name="Gilna P."/>
            <person name="Lucas S.M."/>
            <person name="Myers R.M."/>
            <person name="Rubin E.M."/>
            <person name="Pennacchio L.A."/>
        </authorList>
    </citation>
    <scope>NUCLEOTIDE SEQUENCE [LARGE SCALE GENOMIC DNA]</scope>
</reference>
<reference key="4">
    <citation type="submission" date="2005-09" db="EMBL/GenBank/DDBJ databases">
        <authorList>
            <person name="Mural R.J."/>
            <person name="Istrail S."/>
            <person name="Sutton G.G."/>
            <person name="Florea L."/>
            <person name="Halpern A.L."/>
            <person name="Mobarry C.M."/>
            <person name="Lippert R."/>
            <person name="Walenz B."/>
            <person name="Shatkay H."/>
            <person name="Dew I."/>
            <person name="Miller J.R."/>
            <person name="Flanigan M.J."/>
            <person name="Edwards N.J."/>
            <person name="Bolanos R."/>
            <person name="Fasulo D."/>
            <person name="Halldorsson B.V."/>
            <person name="Hannenhalli S."/>
            <person name="Turner R."/>
            <person name="Yooseph S."/>
            <person name="Lu F."/>
            <person name="Nusskern D.R."/>
            <person name="Shue B.C."/>
            <person name="Zheng X.H."/>
            <person name="Zhong F."/>
            <person name="Delcher A.L."/>
            <person name="Huson D.H."/>
            <person name="Kravitz S.A."/>
            <person name="Mouchard L."/>
            <person name="Reinert K."/>
            <person name="Remington K.A."/>
            <person name="Clark A.G."/>
            <person name="Waterman M.S."/>
            <person name="Eichler E.E."/>
            <person name="Adams M.D."/>
            <person name="Hunkapiller M.W."/>
            <person name="Myers E.W."/>
            <person name="Venter J.C."/>
        </authorList>
    </citation>
    <scope>NUCLEOTIDE SEQUENCE [LARGE SCALE GENOMIC DNA]</scope>
</reference>
<reference key="5">
    <citation type="journal article" date="2004" name="Genome Res.">
        <title>The status, quality, and expansion of the NIH full-length cDNA project: the Mammalian Gene Collection (MGC).</title>
        <authorList>
            <consortium name="The MGC Project Team"/>
        </authorList>
    </citation>
    <scope>NUCLEOTIDE SEQUENCE [LARGE SCALE MRNA] (ISOFORMS 2 AND 3)</scope>
    <source>
        <tissue>Testis</tissue>
    </source>
</reference>
<reference key="6">
    <citation type="submission" date="2009-06" db="UniProtKB">
        <authorList>
            <person name="Bienvenut W.V."/>
            <person name="Dozynkiewicz M."/>
            <person name="Norman J.C."/>
        </authorList>
    </citation>
    <scope>PROTEIN SEQUENCE OF 1-9; 134-161 AND 181-188</scope>
    <scope>ACETYLATION AT MET-1</scope>
    <scope>IDENTIFICATION BY MASS SPECTROMETRY</scope>
    <source>
        <tissue>Ovarian carcinoma</tissue>
    </source>
</reference>
<reference key="7">
    <citation type="journal article" date="2012" name="Proc. Natl. Acad. Sci. U.S.A.">
        <title>N-terminal acetylome analyses and functional insights of the N-terminal acetyltransferase NatB.</title>
        <authorList>
            <person name="Van Damme P."/>
            <person name="Lasa M."/>
            <person name="Polevoda B."/>
            <person name="Gazquez C."/>
            <person name="Elosegui-Artola A."/>
            <person name="Kim D.S."/>
            <person name="De Juan-Pardo E."/>
            <person name="Demeyer K."/>
            <person name="Hole K."/>
            <person name="Larrea E."/>
            <person name="Timmerman E."/>
            <person name="Prieto J."/>
            <person name="Arnesen T."/>
            <person name="Sherman F."/>
            <person name="Gevaert K."/>
            <person name="Aldabe R."/>
        </authorList>
    </citation>
    <scope>ACETYLATION [LARGE SCALE ANALYSIS] AT MET-1</scope>
    <scope>IDENTIFICATION BY MASS SPECTROMETRY [LARGE SCALE ANALYSIS]</scope>
</reference>
<reference key="8">
    <citation type="journal article" date="2010" name="Am. J. Hum. Genet.">
        <title>A focal epilepsy and intellectual disability syndrome is due to a mutation in TBC1D24.</title>
        <authorList>
            <person name="Corbett M.A."/>
            <person name="Bahlo M."/>
            <person name="Jolly L."/>
            <person name="Afawi Z."/>
            <person name="Gardner A.E."/>
            <person name="Oliver K.L."/>
            <person name="Tan S."/>
            <person name="Coffey A."/>
            <person name="Mulley J.C."/>
            <person name="Dibbens L.M."/>
            <person name="Simri W."/>
            <person name="Shalata A."/>
            <person name="Kivity S."/>
            <person name="Jackson G.D."/>
            <person name="Berkovic S.F."/>
            <person name="Gecz J."/>
        </authorList>
    </citation>
    <scope>VARIANT PRO-136</scope>
</reference>
<feature type="chain" id="PRO_0000337114" description="Methyltransferase-like 26">
    <location>
        <begin position="1"/>
        <end position="204"/>
    </location>
</feature>
<feature type="modified residue" description="N-acetylmethionine" evidence="3 8">
    <location>
        <position position="1"/>
    </location>
</feature>
<feature type="modified residue" description="Phosphoserine" evidence="1">
    <location>
        <position position="149"/>
    </location>
</feature>
<feature type="splice variant" id="VSP_033918" description="In isoform 2." evidence="4 5">
    <original>SIAATTQAQGLTNVKAPLHLDVTWGWEHWGGILPQSLDLLLCINMAHVSPLRCTEGLFRAAGHLLKPRALLITYGPYAINGKISPQSNVDFDLMLRCRNPEWGLRDTALLEDLGKASGLLLERMVDMPANNKCLIFRKN</original>
    <variation>RCGPRGGHFYRCGGPGPQEPTARSPGGKGCGSGSEGAGWEPGGAPGAGPSCAAPAAAEVGGPRGPPSQPLWSPLLNVPPSLP</variation>
    <location>
        <begin position="66"/>
        <end position="204"/>
    </location>
</feature>
<feature type="splice variant" id="VSP_046838" description="In isoform 5." evidence="6">
    <original>SIAATTQAQGLTNVKAPLHLDVTWGWEHWGGILPQSLDLLLCINMAHVSPLRCTEGLFRAAGHLLKPRALLITYGPYAINGKISPQSNVDFDLMLRCR</original>
    <variation>RGSSEQQDTCSNPGPCSSPTG</variation>
    <location>
        <begin position="66"/>
        <end position="163"/>
    </location>
</feature>
<feature type="splice variant" id="VSP_033919" description="In isoform 3." evidence="5">
    <location>
        <begin position="66"/>
        <end position="162"/>
    </location>
</feature>
<feature type="splice variant" id="VSP_046839" description="In isoform 6." evidence="6">
    <original>GLFRAAGHLLKPRALLITYGPYAINGKISPQSNVDFDLMLRCRNPEWGLRDTALLEDLGKASGLLLERMVDMPANNKCLIFRKN</original>
    <variation>EPRMGASGHSPPGGPGKGQWPAPGEDGGHASQQQMPDLPEKLSPSFTPAHLHPCRRLCEARTLPP</variation>
    <location>
        <begin position="121"/>
        <end position="204"/>
    </location>
</feature>
<feature type="splice variant" id="VSP_045804" description="In isoform 4." evidence="4">
    <original>PYAINGKISPQSNVDFDLMLRCRNPEWGLRDTALLEDLGKASGLLLERMVDMPANNKCLIFRKN</original>
    <variation>EPRMGASGHSPPGGPGKGQWPAPGEDGGHASQQQMPDLPEKLSPSFTPAHLHPCRRLCEARTLPP</variation>
    <location>
        <begin position="141"/>
        <end position="204"/>
    </location>
</feature>
<feature type="sequence variant" id="VAR_064368" description="In dbSNP:rs865791888." evidence="2">
    <original>L</original>
    <variation>P</variation>
    <location>
        <position position="136"/>
    </location>
</feature>
<feature type="sequence conflict" description="In Ref. 1; BAG58505." evidence="6" ref="1">
    <original>R</original>
    <variation>G</variation>
    <location sequence="Q96S19-4">
        <position position="196"/>
    </location>
</feature>